<sequence length="342" mass="37067">MRIKTRNFIMQTQQILTQLFDNQPLSQEQAAFIFGNIVKGELSNEQLAGALIALKIRGETIDEITGAVTALLAAAEPFPAPDYPFADIVGTGGDNADTINISTASAIVAASMGLKIAKHGNRSVSSKTGASDVLTALGVNIRMSTEQARKALDEIGIAFIFAQQYHLGFKYAGPVRQALKTRTIFNILGPLINPANPKRQLLGVYSPELLKPYAETNLRLNHEHSIIVHGCGLDEVAIHGLTQVAELRDGKIEYYNLSPKDFGFEPQPLESLRGGAPEENAKILTALLQGKGSEQQAQAVAMNTALLMKLFGHEDIKQNAQQVLEQLTTGKAFETLTKLTTY</sequence>
<reference key="1">
    <citation type="journal article" date="2004" name="Nat. Biotechnol.">
        <title>The genome sequence of the capnophilic rumen bacterium Mannheimia succiniciproducens.</title>
        <authorList>
            <person name="Hong S.H."/>
            <person name="Kim J.S."/>
            <person name="Lee S.Y."/>
            <person name="In Y.H."/>
            <person name="Choi S.S."/>
            <person name="Rih J.-K."/>
            <person name="Kim C.H."/>
            <person name="Jeong H."/>
            <person name="Hur C.G."/>
            <person name="Kim J.J."/>
        </authorList>
    </citation>
    <scope>NUCLEOTIDE SEQUENCE [LARGE SCALE GENOMIC DNA]</scope>
    <source>
        <strain>KCTC 0769BP / MBEL55E</strain>
    </source>
</reference>
<dbReference type="EC" id="2.4.2.18" evidence="1"/>
<dbReference type="EMBL" id="AE016827">
    <property type="protein sequence ID" value="AAU37758.1"/>
    <property type="molecule type" value="Genomic_DNA"/>
</dbReference>
<dbReference type="SMR" id="Q65TF2"/>
<dbReference type="STRING" id="221988.MS1151"/>
<dbReference type="KEGG" id="msu:MS1151"/>
<dbReference type="eggNOG" id="COG0547">
    <property type="taxonomic scope" value="Bacteria"/>
</dbReference>
<dbReference type="HOGENOM" id="CLU_034315_3_0_6"/>
<dbReference type="UniPathway" id="UPA00035">
    <property type="reaction ID" value="UER00041"/>
</dbReference>
<dbReference type="Proteomes" id="UP000000607">
    <property type="component" value="Chromosome"/>
</dbReference>
<dbReference type="GO" id="GO:0005829">
    <property type="term" value="C:cytosol"/>
    <property type="evidence" value="ECO:0007669"/>
    <property type="project" value="TreeGrafter"/>
</dbReference>
<dbReference type="GO" id="GO:0004048">
    <property type="term" value="F:anthranilate phosphoribosyltransferase activity"/>
    <property type="evidence" value="ECO:0007669"/>
    <property type="project" value="UniProtKB-UniRule"/>
</dbReference>
<dbReference type="GO" id="GO:0000287">
    <property type="term" value="F:magnesium ion binding"/>
    <property type="evidence" value="ECO:0007669"/>
    <property type="project" value="UniProtKB-UniRule"/>
</dbReference>
<dbReference type="GO" id="GO:0000162">
    <property type="term" value="P:L-tryptophan biosynthetic process"/>
    <property type="evidence" value="ECO:0007669"/>
    <property type="project" value="UniProtKB-UniRule"/>
</dbReference>
<dbReference type="FunFam" id="3.40.1030.10:FF:000002">
    <property type="entry name" value="Anthranilate phosphoribosyltransferase"/>
    <property type="match status" value="1"/>
</dbReference>
<dbReference type="Gene3D" id="3.40.1030.10">
    <property type="entry name" value="Nucleoside phosphorylase/phosphoribosyltransferase catalytic domain"/>
    <property type="match status" value="1"/>
</dbReference>
<dbReference type="Gene3D" id="1.20.970.10">
    <property type="entry name" value="Transferase, Pyrimidine Nucleoside Phosphorylase, Chain C"/>
    <property type="match status" value="1"/>
</dbReference>
<dbReference type="HAMAP" id="MF_00211">
    <property type="entry name" value="TrpD"/>
    <property type="match status" value="1"/>
</dbReference>
<dbReference type="InterPro" id="IPR005940">
    <property type="entry name" value="Anthranilate_Pribosyl_Tfrase"/>
</dbReference>
<dbReference type="InterPro" id="IPR000312">
    <property type="entry name" value="Glycosyl_Trfase_fam3"/>
</dbReference>
<dbReference type="InterPro" id="IPR017459">
    <property type="entry name" value="Glycosyl_Trfase_fam3_N_dom"/>
</dbReference>
<dbReference type="InterPro" id="IPR036320">
    <property type="entry name" value="Glycosyl_Trfase_fam3_N_dom_sf"/>
</dbReference>
<dbReference type="InterPro" id="IPR035902">
    <property type="entry name" value="Nuc_phospho_transferase"/>
</dbReference>
<dbReference type="NCBIfam" id="TIGR01245">
    <property type="entry name" value="trpD"/>
    <property type="match status" value="1"/>
</dbReference>
<dbReference type="PANTHER" id="PTHR43285">
    <property type="entry name" value="ANTHRANILATE PHOSPHORIBOSYLTRANSFERASE"/>
    <property type="match status" value="1"/>
</dbReference>
<dbReference type="PANTHER" id="PTHR43285:SF2">
    <property type="entry name" value="ANTHRANILATE PHOSPHORIBOSYLTRANSFERASE"/>
    <property type="match status" value="1"/>
</dbReference>
<dbReference type="Pfam" id="PF02885">
    <property type="entry name" value="Glycos_trans_3N"/>
    <property type="match status" value="1"/>
</dbReference>
<dbReference type="Pfam" id="PF00591">
    <property type="entry name" value="Glycos_transf_3"/>
    <property type="match status" value="1"/>
</dbReference>
<dbReference type="SUPFAM" id="SSF52418">
    <property type="entry name" value="Nucleoside phosphorylase/phosphoribosyltransferase catalytic domain"/>
    <property type="match status" value="1"/>
</dbReference>
<dbReference type="SUPFAM" id="SSF47648">
    <property type="entry name" value="Nucleoside phosphorylase/phosphoribosyltransferase N-terminal domain"/>
    <property type="match status" value="1"/>
</dbReference>
<organism>
    <name type="scientific">Mannheimia succiniciproducens (strain KCTC 0769BP / MBEL55E)</name>
    <dbReference type="NCBI Taxonomy" id="221988"/>
    <lineage>
        <taxon>Bacteria</taxon>
        <taxon>Pseudomonadati</taxon>
        <taxon>Pseudomonadota</taxon>
        <taxon>Gammaproteobacteria</taxon>
        <taxon>Pasteurellales</taxon>
        <taxon>Pasteurellaceae</taxon>
        <taxon>Basfia</taxon>
    </lineage>
</organism>
<keyword id="KW-0028">Amino-acid biosynthesis</keyword>
<keyword id="KW-0057">Aromatic amino acid biosynthesis</keyword>
<keyword id="KW-0328">Glycosyltransferase</keyword>
<keyword id="KW-0460">Magnesium</keyword>
<keyword id="KW-0479">Metal-binding</keyword>
<keyword id="KW-0808">Transferase</keyword>
<keyword id="KW-0822">Tryptophan biosynthesis</keyword>
<comment type="function">
    <text evidence="1">Catalyzes the transfer of the phosphoribosyl group of 5-phosphorylribose-1-pyrophosphate (PRPP) to anthranilate to yield N-(5'-phosphoribosyl)-anthranilate (PRA).</text>
</comment>
<comment type="catalytic activity">
    <reaction evidence="1">
        <text>N-(5-phospho-beta-D-ribosyl)anthranilate + diphosphate = 5-phospho-alpha-D-ribose 1-diphosphate + anthranilate</text>
        <dbReference type="Rhea" id="RHEA:11768"/>
        <dbReference type="ChEBI" id="CHEBI:16567"/>
        <dbReference type="ChEBI" id="CHEBI:18277"/>
        <dbReference type="ChEBI" id="CHEBI:33019"/>
        <dbReference type="ChEBI" id="CHEBI:58017"/>
        <dbReference type="EC" id="2.4.2.18"/>
    </reaction>
</comment>
<comment type="cofactor">
    <cofactor evidence="1">
        <name>Mg(2+)</name>
        <dbReference type="ChEBI" id="CHEBI:18420"/>
    </cofactor>
    <text evidence="1">Binds 2 magnesium ions per monomer.</text>
</comment>
<comment type="pathway">
    <text evidence="1">Amino-acid biosynthesis; L-tryptophan biosynthesis; L-tryptophan from chorismate: step 2/5.</text>
</comment>
<comment type="subunit">
    <text evidence="1">Homodimer.</text>
</comment>
<comment type="similarity">
    <text evidence="1">Belongs to the anthranilate phosphoribosyltransferase family.</text>
</comment>
<proteinExistence type="inferred from homology"/>
<gene>
    <name evidence="1" type="primary">trpD</name>
    <name type="ordered locus">MS1151</name>
</gene>
<accession>Q65TF2</accession>
<evidence type="ECO:0000255" key="1">
    <source>
        <dbReference type="HAMAP-Rule" id="MF_00211"/>
    </source>
</evidence>
<feature type="chain" id="PRO_0000227167" description="Anthranilate phosphoribosyltransferase">
    <location>
        <begin position="1"/>
        <end position="342"/>
    </location>
</feature>
<feature type="binding site" evidence="1">
    <location>
        <position position="90"/>
    </location>
    <ligand>
        <name>5-phospho-alpha-D-ribose 1-diphosphate</name>
        <dbReference type="ChEBI" id="CHEBI:58017"/>
    </ligand>
</feature>
<feature type="binding site" evidence="1">
    <location>
        <position position="90"/>
    </location>
    <ligand>
        <name>anthranilate</name>
        <dbReference type="ChEBI" id="CHEBI:16567"/>
        <label>1</label>
    </ligand>
</feature>
<feature type="binding site" evidence="1">
    <location>
        <begin position="93"/>
        <end position="94"/>
    </location>
    <ligand>
        <name>5-phospho-alpha-D-ribose 1-diphosphate</name>
        <dbReference type="ChEBI" id="CHEBI:58017"/>
    </ligand>
</feature>
<feature type="binding site" evidence="1">
    <location>
        <position position="98"/>
    </location>
    <ligand>
        <name>5-phospho-alpha-D-ribose 1-diphosphate</name>
        <dbReference type="ChEBI" id="CHEBI:58017"/>
    </ligand>
</feature>
<feature type="binding site" evidence="1">
    <location>
        <begin position="100"/>
        <end position="103"/>
    </location>
    <ligand>
        <name>5-phospho-alpha-D-ribose 1-diphosphate</name>
        <dbReference type="ChEBI" id="CHEBI:58017"/>
    </ligand>
</feature>
<feature type="binding site" evidence="1">
    <location>
        <position position="102"/>
    </location>
    <ligand>
        <name>Mg(2+)</name>
        <dbReference type="ChEBI" id="CHEBI:18420"/>
        <label>1</label>
    </ligand>
</feature>
<feature type="binding site" evidence="1">
    <location>
        <begin position="118"/>
        <end position="126"/>
    </location>
    <ligand>
        <name>5-phospho-alpha-D-ribose 1-diphosphate</name>
        <dbReference type="ChEBI" id="CHEBI:58017"/>
    </ligand>
</feature>
<feature type="binding site" evidence="1">
    <location>
        <position position="121"/>
    </location>
    <ligand>
        <name>anthranilate</name>
        <dbReference type="ChEBI" id="CHEBI:16567"/>
        <label>1</label>
    </ligand>
</feature>
<feature type="binding site" evidence="1">
    <location>
        <position position="130"/>
    </location>
    <ligand>
        <name>5-phospho-alpha-D-ribose 1-diphosphate</name>
        <dbReference type="ChEBI" id="CHEBI:58017"/>
    </ligand>
</feature>
<feature type="binding site" evidence="1">
    <location>
        <position position="176"/>
    </location>
    <ligand>
        <name>anthranilate</name>
        <dbReference type="ChEBI" id="CHEBI:16567"/>
        <label>2</label>
    </ligand>
</feature>
<feature type="binding site" evidence="1">
    <location>
        <position position="234"/>
    </location>
    <ligand>
        <name>Mg(2+)</name>
        <dbReference type="ChEBI" id="CHEBI:18420"/>
        <label>2</label>
    </ligand>
</feature>
<feature type="binding site" evidence="1">
    <location>
        <position position="235"/>
    </location>
    <ligand>
        <name>Mg(2+)</name>
        <dbReference type="ChEBI" id="CHEBI:18420"/>
        <label>1</label>
    </ligand>
</feature>
<feature type="binding site" evidence="1">
    <location>
        <position position="235"/>
    </location>
    <ligand>
        <name>Mg(2+)</name>
        <dbReference type="ChEBI" id="CHEBI:18420"/>
        <label>2</label>
    </ligand>
</feature>
<name>TRPD_MANSM</name>
<protein>
    <recommendedName>
        <fullName evidence="1">Anthranilate phosphoribosyltransferase</fullName>
        <ecNumber evidence="1">2.4.2.18</ecNumber>
    </recommendedName>
</protein>